<accession>Q65P72</accession>
<accession>Q62ZL1</accession>
<dbReference type="EMBL" id="CP000002">
    <property type="protein sequence ID" value="AAU21797.1"/>
    <property type="molecule type" value="Genomic_DNA"/>
</dbReference>
<dbReference type="EMBL" id="AE017333">
    <property type="protein sequence ID" value="AAU39142.1"/>
    <property type="molecule type" value="Genomic_DNA"/>
</dbReference>
<dbReference type="RefSeq" id="WP_003178395.1">
    <property type="nucleotide sequence ID" value="NC_006322.1"/>
</dbReference>
<dbReference type="SMR" id="Q65P72"/>
<dbReference type="STRING" id="279010.BL01018"/>
<dbReference type="GeneID" id="92858868"/>
<dbReference type="KEGG" id="bld:BLi00168"/>
<dbReference type="KEGG" id="bli:BL01018"/>
<dbReference type="PATRIC" id="fig|279010.13.peg.158"/>
<dbReference type="eggNOG" id="COG0103">
    <property type="taxonomic scope" value="Bacteria"/>
</dbReference>
<dbReference type="HOGENOM" id="CLU_046483_2_1_9"/>
<dbReference type="Proteomes" id="UP000000606">
    <property type="component" value="Chromosome"/>
</dbReference>
<dbReference type="GO" id="GO:0022627">
    <property type="term" value="C:cytosolic small ribosomal subunit"/>
    <property type="evidence" value="ECO:0007669"/>
    <property type="project" value="TreeGrafter"/>
</dbReference>
<dbReference type="GO" id="GO:0003723">
    <property type="term" value="F:RNA binding"/>
    <property type="evidence" value="ECO:0007669"/>
    <property type="project" value="TreeGrafter"/>
</dbReference>
<dbReference type="GO" id="GO:0003735">
    <property type="term" value="F:structural constituent of ribosome"/>
    <property type="evidence" value="ECO:0007669"/>
    <property type="project" value="InterPro"/>
</dbReference>
<dbReference type="GO" id="GO:0006412">
    <property type="term" value="P:translation"/>
    <property type="evidence" value="ECO:0007669"/>
    <property type="project" value="UniProtKB-UniRule"/>
</dbReference>
<dbReference type="FunFam" id="3.30.230.10:FF:000001">
    <property type="entry name" value="30S ribosomal protein S9"/>
    <property type="match status" value="1"/>
</dbReference>
<dbReference type="Gene3D" id="3.30.230.10">
    <property type="match status" value="1"/>
</dbReference>
<dbReference type="HAMAP" id="MF_00532_B">
    <property type="entry name" value="Ribosomal_uS9_B"/>
    <property type="match status" value="1"/>
</dbReference>
<dbReference type="InterPro" id="IPR020568">
    <property type="entry name" value="Ribosomal_Su5_D2-typ_SF"/>
</dbReference>
<dbReference type="InterPro" id="IPR000754">
    <property type="entry name" value="Ribosomal_uS9"/>
</dbReference>
<dbReference type="InterPro" id="IPR023035">
    <property type="entry name" value="Ribosomal_uS9_bac/plastid"/>
</dbReference>
<dbReference type="InterPro" id="IPR020574">
    <property type="entry name" value="Ribosomal_uS9_CS"/>
</dbReference>
<dbReference type="InterPro" id="IPR014721">
    <property type="entry name" value="Ribsml_uS5_D2-typ_fold_subgr"/>
</dbReference>
<dbReference type="NCBIfam" id="NF001099">
    <property type="entry name" value="PRK00132.1"/>
    <property type="match status" value="1"/>
</dbReference>
<dbReference type="PANTHER" id="PTHR21569">
    <property type="entry name" value="RIBOSOMAL PROTEIN S9"/>
    <property type="match status" value="1"/>
</dbReference>
<dbReference type="PANTHER" id="PTHR21569:SF1">
    <property type="entry name" value="SMALL RIBOSOMAL SUBUNIT PROTEIN US9M"/>
    <property type="match status" value="1"/>
</dbReference>
<dbReference type="Pfam" id="PF00380">
    <property type="entry name" value="Ribosomal_S9"/>
    <property type="match status" value="1"/>
</dbReference>
<dbReference type="SUPFAM" id="SSF54211">
    <property type="entry name" value="Ribosomal protein S5 domain 2-like"/>
    <property type="match status" value="1"/>
</dbReference>
<dbReference type="PROSITE" id="PS00360">
    <property type="entry name" value="RIBOSOMAL_S9"/>
    <property type="match status" value="1"/>
</dbReference>
<sequence length="130" mass="14342">MAQVQYYGTGRRKSSVARVRLVPGEGRIIVNNREISEHIPSAALIEDIKQPLTLTETAGTYDVLVNVHGGGFSGQAGAIRHGIARALLEADPEYRSTLKRAGLLTRDARMKERKKYGLKGARRAPQFSKR</sequence>
<reference key="1">
    <citation type="journal article" date="2004" name="J. Mol. Microbiol. Biotechnol.">
        <title>The complete genome sequence of Bacillus licheniformis DSM13, an organism with great industrial potential.</title>
        <authorList>
            <person name="Veith B."/>
            <person name="Herzberg C."/>
            <person name="Steckel S."/>
            <person name="Feesche J."/>
            <person name="Maurer K.H."/>
            <person name="Ehrenreich P."/>
            <person name="Baeumer S."/>
            <person name="Henne A."/>
            <person name="Liesegang H."/>
            <person name="Merkl R."/>
            <person name="Ehrenreich A."/>
            <person name="Gottschalk G."/>
        </authorList>
    </citation>
    <scope>NUCLEOTIDE SEQUENCE [LARGE SCALE GENOMIC DNA]</scope>
    <source>
        <strain>ATCC 14580 / DSM 13 / JCM 2505 / CCUG 7422 / NBRC 12200 / NCIMB 9375 / NCTC 10341 / NRRL NRS-1264 / Gibson 46</strain>
    </source>
</reference>
<reference key="2">
    <citation type="journal article" date="2004" name="Genome Biol.">
        <title>Complete genome sequence of the industrial bacterium Bacillus licheniformis and comparisons with closely related Bacillus species.</title>
        <authorList>
            <person name="Rey M.W."/>
            <person name="Ramaiya P."/>
            <person name="Nelson B.A."/>
            <person name="Brody-Karpin S.D."/>
            <person name="Zaretsky E.J."/>
            <person name="Tang M."/>
            <person name="Lopez de Leon A."/>
            <person name="Xiang H."/>
            <person name="Gusti V."/>
            <person name="Clausen I.G."/>
            <person name="Olsen P.B."/>
            <person name="Rasmussen M.D."/>
            <person name="Andersen J.T."/>
            <person name="Joergensen P.L."/>
            <person name="Larsen T.S."/>
            <person name="Sorokin A."/>
            <person name="Bolotin A."/>
            <person name="Lapidus A."/>
            <person name="Galleron N."/>
            <person name="Ehrlich S.D."/>
            <person name="Berka R.M."/>
        </authorList>
    </citation>
    <scope>NUCLEOTIDE SEQUENCE [LARGE SCALE GENOMIC DNA]</scope>
    <source>
        <strain>ATCC 14580 / DSM 13 / JCM 2505 / CCUG 7422 / NBRC 12200 / NCIMB 9375 / NCTC 10341 / NRRL NRS-1264 / Gibson 46</strain>
    </source>
</reference>
<keyword id="KW-1185">Reference proteome</keyword>
<keyword id="KW-0687">Ribonucleoprotein</keyword>
<keyword id="KW-0689">Ribosomal protein</keyword>
<gene>
    <name evidence="1" type="primary">rpsI</name>
    <name type="ordered locus">BLi00168</name>
    <name type="ordered locus">BL01018</name>
</gene>
<protein>
    <recommendedName>
        <fullName evidence="1">Small ribosomal subunit protein uS9</fullName>
    </recommendedName>
    <alternativeName>
        <fullName evidence="2">30S ribosomal protein S9</fullName>
    </alternativeName>
</protein>
<evidence type="ECO:0000255" key="1">
    <source>
        <dbReference type="HAMAP-Rule" id="MF_00532"/>
    </source>
</evidence>
<evidence type="ECO:0000305" key="2"/>
<proteinExistence type="inferred from homology"/>
<comment type="similarity">
    <text evidence="1">Belongs to the universal ribosomal protein uS9 family.</text>
</comment>
<feature type="chain" id="PRO_1000051165" description="Small ribosomal subunit protein uS9">
    <location>
        <begin position="1"/>
        <end position="130"/>
    </location>
</feature>
<name>RS9_BACLD</name>
<organism>
    <name type="scientific">Bacillus licheniformis (strain ATCC 14580 / DSM 13 / JCM 2505 / CCUG 7422 / NBRC 12200 / NCIMB 9375 / NCTC 10341 / NRRL NRS-1264 / Gibson 46)</name>
    <dbReference type="NCBI Taxonomy" id="279010"/>
    <lineage>
        <taxon>Bacteria</taxon>
        <taxon>Bacillati</taxon>
        <taxon>Bacillota</taxon>
        <taxon>Bacilli</taxon>
        <taxon>Bacillales</taxon>
        <taxon>Bacillaceae</taxon>
        <taxon>Bacillus</taxon>
    </lineage>
</organism>